<name>RAD55_YEAST</name>
<sequence length="406" mass="46350">MSLGIPLSQLIVESPKPLSSGITGLDEILNLGFQARSIYEIFGPPGIGKTNFGIQLVCNSLEGIQQSEINDDKILWIETFQEMPINILRERFQKFKIVEENVKRVRITKFGQLLYFFQNLFKLSQSVRYKLVIIDGFSQLVCDHLCTLSKRGGGMIDKTIHELKCRHLILIFTVMTKYTHSTGSTIIVLNDCMNTAFQSNEFESLEEYYEILDDGSNFFVNSNNERRKNNVHILKSALVANIAMGSKDSTWEVFLRDRIGLFRDWNEQVDETVFVKSKRVKASSSQSNEGCTTIKEMRINKRNFENLRIAIVFNLHGEDRKREGRNLKRSRSSDDRNYIVKFDFDKATGQLRDIIDLKPDTANIASFPTLSTSSSSCSQVFNNIDSNDNPLPNAEGKEEIIYDSEG</sequence>
<gene>
    <name type="primary">RAD55</name>
    <name type="ordered locus">YDR076W</name>
    <name type="ORF">D4426</name>
</gene>
<accession>P38953</accession>
<accession>D6VS62</accession>
<dbReference type="EMBL" id="Z46796">
    <property type="protein sequence ID" value="CAA86798.1"/>
    <property type="molecule type" value="Genomic_DNA"/>
</dbReference>
<dbReference type="EMBL" id="D10481">
    <property type="protein sequence ID" value="BAA01284.1"/>
    <property type="molecule type" value="Genomic_DNA"/>
</dbReference>
<dbReference type="EMBL" id="U01144">
    <property type="protein sequence ID" value="AAA19688.1"/>
    <property type="molecule type" value="Genomic_DNA"/>
</dbReference>
<dbReference type="EMBL" id="X82086">
    <property type="protein sequence ID" value="CAA57603.1"/>
    <property type="molecule type" value="Genomic_DNA"/>
</dbReference>
<dbReference type="EMBL" id="Z74372">
    <property type="protein sequence ID" value="CAA98895.1"/>
    <property type="molecule type" value="Genomic_DNA"/>
</dbReference>
<dbReference type="EMBL" id="AY723773">
    <property type="protein sequence ID" value="AAU09690.1"/>
    <property type="molecule type" value="Genomic_DNA"/>
</dbReference>
<dbReference type="EMBL" id="BK006938">
    <property type="protein sequence ID" value="DAA11922.1"/>
    <property type="molecule type" value="Genomic_DNA"/>
</dbReference>
<dbReference type="PIR" id="S48763">
    <property type="entry name" value="S48763"/>
</dbReference>
<dbReference type="RefSeq" id="NP_010361.3">
    <property type="nucleotide sequence ID" value="NM_001180384.3"/>
</dbReference>
<dbReference type="BioGRID" id="32131">
    <property type="interactions" value="276"/>
</dbReference>
<dbReference type="ComplexPortal" id="CPX-3139">
    <property type="entry name" value="RAD55-RAD57 complex"/>
</dbReference>
<dbReference type="DIP" id="DIP-1554N"/>
<dbReference type="FunCoup" id="P38953">
    <property type="interactions" value="88"/>
</dbReference>
<dbReference type="IntAct" id="P38953">
    <property type="interactions" value="12"/>
</dbReference>
<dbReference type="MINT" id="P38953"/>
<dbReference type="STRING" id="4932.YDR076W"/>
<dbReference type="iPTMnet" id="P38953"/>
<dbReference type="PaxDb" id="4932-YDR076W"/>
<dbReference type="PeptideAtlas" id="P38953"/>
<dbReference type="EnsemblFungi" id="YDR076W_mRNA">
    <property type="protein sequence ID" value="YDR076W"/>
    <property type="gene ID" value="YDR076W"/>
</dbReference>
<dbReference type="GeneID" id="851648"/>
<dbReference type="KEGG" id="sce:YDR076W"/>
<dbReference type="AGR" id="SGD:S000002483"/>
<dbReference type="SGD" id="S000002483">
    <property type="gene designation" value="RAD55"/>
</dbReference>
<dbReference type="VEuPathDB" id="FungiDB:YDR076W"/>
<dbReference type="eggNOG" id="ENOG502RTRR">
    <property type="taxonomic scope" value="Eukaryota"/>
</dbReference>
<dbReference type="HOGENOM" id="CLU_053754_0_0_1"/>
<dbReference type="InParanoid" id="P38953"/>
<dbReference type="OMA" id="TIHELKC"/>
<dbReference type="OrthoDB" id="5957327at2759"/>
<dbReference type="BioCyc" id="YEAST:G3O-29681-MONOMER"/>
<dbReference type="BioGRID-ORCS" id="851648">
    <property type="hits" value="0 hits in 10 CRISPR screens"/>
</dbReference>
<dbReference type="PRO" id="PR:P38953"/>
<dbReference type="Proteomes" id="UP000002311">
    <property type="component" value="Chromosome IV"/>
</dbReference>
<dbReference type="RNAct" id="P38953">
    <property type="molecule type" value="protein"/>
</dbReference>
<dbReference type="GO" id="GO:0033063">
    <property type="term" value="C:Rad51B-Rad51C-Rad51D-XRCC2 complex"/>
    <property type="evidence" value="ECO:0000318"/>
    <property type="project" value="GO_Central"/>
</dbReference>
<dbReference type="GO" id="GO:0033065">
    <property type="term" value="C:Rad51C-XRCC3 complex"/>
    <property type="evidence" value="ECO:0000314"/>
    <property type="project" value="SGD"/>
</dbReference>
<dbReference type="GO" id="GO:0005657">
    <property type="term" value="C:replication fork"/>
    <property type="evidence" value="ECO:0000318"/>
    <property type="project" value="GO_Central"/>
</dbReference>
<dbReference type="GO" id="GO:0005524">
    <property type="term" value="F:ATP binding"/>
    <property type="evidence" value="ECO:0007669"/>
    <property type="project" value="UniProtKB-KW"/>
</dbReference>
<dbReference type="GO" id="GO:0008094">
    <property type="term" value="F:ATP-dependent activity, acting on DNA"/>
    <property type="evidence" value="ECO:0000250"/>
    <property type="project" value="SGD"/>
</dbReference>
<dbReference type="GO" id="GO:0140664">
    <property type="term" value="F:ATP-dependent DNA damage sensor activity"/>
    <property type="evidence" value="ECO:0007669"/>
    <property type="project" value="InterPro"/>
</dbReference>
<dbReference type="GO" id="GO:0003677">
    <property type="term" value="F:DNA binding"/>
    <property type="evidence" value="ECO:0007669"/>
    <property type="project" value="InterPro"/>
</dbReference>
<dbReference type="GO" id="GO:0000730">
    <property type="term" value="P:DNA recombinase assembly"/>
    <property type="evidence" value="ECO:0000315"/>
    <property type="project" value="SGD"/>
</dbReference>
<dbReference type="GO" id="GO:0006302">
    <property type="term" value="P:double-strand break repair"/>
    <property type="evidence" value="ECO:0000315"/>
    <property type="project" value="ComplexPortal"/>
</dbReference>
<dbReference type="GO" id="GO:0042275">
    <property type="term" value="P:error-free postreplication DNA repair"/>
    <property type="evidence" value="ECO:0000314"/>
    <property type="project" value="ComplexPortal"/>
</dbReference>
<dbReference type="GO" id="GO:0030491">
    <property type="term" value="P:heteroduplex formation"/>
    <property type="evidence" value="ECO:0000314"/>
    <property type="project" value="SGD"/>
</dbReference>
<dbReference type="GO" id="GO:0000707">
    <property type="term" value="P:meiotic DNA recombinase assembly"/>
    <property type="evidence" value="ECO:0000315"/>
    <property type="project" value="SGD"/>
</dbReference>
<dbReference type="GO" id="GO:1903112">
    <property type="term" value="P:positive regulation of single-strand break repair via homologous recombination"/>
    <property type="evidence" value="ECO:0000314"/>
    <property type="project" value="ComplexPortal"/>
</dbReference>
<dbReference type="GO" id="GO:0007131">
    <property type="term" value="P:reciprocal meiotic recombination"/>
    <property type="evidence" value="ECO:0000318"/>
    <property type="project" value="GO_Central"/>
</dbReference>
<dbReference type="FunFam" id="3.40.50.300:FF:002761">
    <property type="entry name" value="DNA repair protein RAD55"/>
    <property type="match status" value="1"/>
</dbReference>
<dbReference type="Gene3D" id="3.40.50.300">
    <property type="entry name" value="P-loop containing nucleotide triphosphate hydrolases"/>
    <property type="match status" value="1"/>
</dbReference>
<dbReference type="InterPro" id="IPR052093">
    <property type="entry name" value="HR_Repair_Mediator"/>
</dbReference>
<dbReference type="InterPro" id="IPR014774">
    <property type="entry name" value="KaiC-like_dom"/>
</dbReference>
<dbReference type="InterPro" id="IPR027417">
    <property type="entry name" value="P-loop_NTPase"/>
</dbReference>
<dbReference type="InterPro" id="IPR020588">
    <property type="entry name" value="RecA_ATP-bd"/>
</dbReference>
<dbReference type="PANTHER" id="PTHR46239:SF1">
    <property type="entry name" value="DNA REPAIR PROTEIN RAD51 HOMOLOG 3"/>
    <property type="match status" value="1"/>
</dbReference>
<dbReference type="PANTHER" id="PTHR46239">
    <property type="entry name" value="DNA REPAIR PROTEIN RAD51 HOMOLOG 3 RAD51C"/>
    <property type="match status" value="1"/>
</dbReference>
<dbReference type="Pfam" id="PF06745">
    <property type="entry name" value="ATPase"/>
    <property type="match status" value="1"/>
</dbReference>
<dbReference type="SUPFAM" id="SSF52540">
    <property type="entry name" value="P-loop containing nucleoside triphosphate hydrolases"/>
    <property type="match status" value="1"/>
</dbReference>
<dbReference type="PROSITE" id="PS50162">
    <property type="entry name" value="RECA_2"/>
    <property type="match status" value="1"/>
</dbReference>
<feature type="chain" id="PRO_0000122954" description="DNA repair protein RAD55">
    <location>
        <begin position="1"/>
        <end position="406"/>
    </location>
</feature>
<feature type="region of interest" description="Disordered" evidence="2">
    <location>
        <begin position="385"/>
        <end position="406"/>
    </location>
</feature>
<feature type="binding site" evidence="1">
    <location>
        <begin position="43"/>
        <end position="50"/>
    </location>
    <ligand>
        <name>ATP</name>
        <dbReference type="ChEBI" id="CHEBI:30616"/>
    </ligand>
</feature>
<feature type="sequence conflict" description="In Ref. 2; AAA19688." evidence="4" ref="2">
    <original>F</original>
    <variation>L</variation>
    <location>
        <position position="110"/>
    </location>
</feature>
<feature type="sequence conflict" description="In Ref. 2; AAA19688." evidence="4" ref="2">
    <original>F</original>
    <variation>N</variation>
    <location>
        <position position="197"/>
    </location>
</feature>
<evidence type="ECO:0000255" key="1"/>
<evidence type="ECO:0000256" key="2">
    <source>
        <dbReference type="SAM" id="MobiDB-lite"/>
    </source>
</evidence>
<evidence type="ECO:0000269" key="3">
    <source>
    </source>
</evidence>
<evidence type="ECO:0000305" key="4"/>
<keyword id="KW-0067">ATP-binding</keyword>
<keyword id="KW-0227">DNA damage</keyword>
<keyword id="KW-0234">DNA repair</keyword>
<keyword id="KW-0547">Nucleotide-binding</keyword>
<keyword id="KW-0539">Nucleus</keyword>
<keyword id="KW-1185">Reference proteome</keyword>
<organism>
    <name type="scientific">Saccharomyces cerevisiae (strain ATCC 204508 / S288c)</name>
    <name type="common">Baker's yeast</name>
    <dbReference type="NCBI Taxonomy" id="559292"/>
    <lineage>
        <taxon>Eukaryota</taxon>
        <taxon>Fungi</taxon>
        <taxon>Dikarya</taxon>
        <taxon>Ascomycota</taxon>
        <taxon>Saccharomycotina</taxon>
        <taxon>Saccharomycetes</taxon>
        <taxon>Saccharomycetales</taxon>
        <taxon>Saccharomycetaceae</taxon>
        <taxon>Saccharomyces</taxon>
    </lineage>
</organism>
<proteinExistence type="evidence at protein level"/>
<comment type="function">
    <text>Required for radiation resistance and meiotic viability and presumably acts in recombination and recombinational DNA repair pathways.</text>
</comment>
<comment type="interaction">
    <interactant intactId="EBI-14737">
        <id>P38953</id>
    </interactant>
    <interactant intactId="EBI-14709">
        <id>P25454</id>
        <label>RAD51</label>
    </interactant>
    <organismsDiffer>false</organismsDiffer>
    <experiments>6</experiments>
</comment>
<comment type="interaction">
    <interactant intactId="EBI-14737">
        <id>P38953</id>
    </interactant>
    <interactant intactId="EBI-14744">
        <id>P25301</id>
        <label>RAD57</label>
    </interactant>
    <organismsDiffer>false</organismsDiffer>
    <experiments>10</experiments>
</comment>
<comment type="interaction">
    <interactant intactId="EBI-14737">
        <id>P38953</id>
    </interactant>
    <interactant intactId="EBI-18110">
        <id>P12954</id>
        <label>SRS2</label>
    </interactant>
    <organismsDiffer>false</organismsDiffer>
    <experiments>4</experiments>
</comment>
<comment type="subcellular location">
    <subcellularLocation>
        <location evidence="4">Nucleus</location>
    </subcellularLocation>
</comment>
<comment type="miscellaneous">
    <text evidence="3">Present with 1050 molecules/cell in log phase SD medium.</text>
</comment>
<comment type="similarity">
    <text evidence="4">Belongs to the RecA family. RAD55 subfamily.</text>
</comment>
<reference key="1">
    <citation type="journal article" date="1994" name="Gene">
        <title>Sequence of the RAD55 gene of Saccharomyces cerevisiae: similarity of RAD55 to prokaryotic RecA and other RecA-like proteins.</title>
        <authorList>
            <person name="Lovett S.T."/>
        </authorList>
    </citation>
    <scope>NUCLEOTIDE SEQUENCE [GENOMIC DNA]</scope>
    <source>
        <strain>ATCC 204510 / AB320</strain>
    </source>
</reference>
<reference key="2">
    <citation type="submission" date="1996-11" db="EMBL/GenBank/DDBJ databases">
        <title>Cloning of the RAD55 gene and identification of its gene product in Saccharomyces cerevisiae.</title>
        <authorList>
            <person name="Kuwahara S."/>
            <person name="Yoshima T."/>
            <person name="Fong J."/>
            <person name="Ogawa T."/>
        </authorList>
    </citation>
    <scope>NUCLEOTIDE SEQUENCE [GENOMIC DNA]</scope>
    <source>
        <strain>ATCC 204508 / S288c</strain>
    </source>
</reference>
<reference key="3">
    <citation type="journal article" date="1995" name="Yeast">
        <title>Analysis of a 32.8 kb segment of yeast chromosome IV reveals 21 open reading frames, including TPS2, PPH3, RAD55, SED1, PDC2, AFR1, SSS1, SLU7 and a tRNA for arginine.</title>
        <authorList>
            <person name="Coster F."/>
            <person name="Jonniaux J.-L."/>
            <person name="Goffeau A."/>
        </authorList>
    </citation>
    <scope>NUCLEOTIDE SEQUENCE [GENOMIC DNA]</scope>
    <source>
        <strain>ATCC 96604 / S288c / FY1679</strain>
    </source>
</reference>
<reference key="4">
    <citation type="journal article" date="1997" name="Nature">
        <title>The nucleotide sequence of Saccharomyces cerevisiae chromosome IV.</title>
        <authorList>
            <person name="Jacq C."/>
            <person name="Alt-Moerbe J."/>
            <person name="Andre B."/>
            <person name="Arnold W."/>
            <person name="Bahr A."/>
            <person name="Ballesta J.P.G."/>
            <person name="Bargues M."/>
            <person name="Baron L."/>
            <person name="Becker A."/>
            <person name="Biteau N."/>
            <person name="Bloecker H."/>
            <person name="Blugeon C."/>
            <person name="Boskovic J."/>
            <person name="Brandt P."/>
            <person name="Brueckner M."/>
            <person name="Buitrago M.J."/>
            <person name="Coster F."/>
            <person name="Delaveau T."/>
            <person name="del Rey F."/>
            <person name="Dujon B."/>
            <person name="Eide L.G."/>
            <person name="Garcia-Cantalejo J.M."/>
            <person name="Goffeau A."/>
            <person name="Gomez-Peris A."/>
            <person name="Granotier C."/>
            <person name="Hanemann V."/>
            <person name="Hankeln T."/>
            <person name="Hoheisel J.D."/>
            <person name="Jaeger W."/>
            <person name="Jimenez A."/>
            <person name="Jonniaux J.-L."/>
            <person name="Kraemer C."/>
            <person name="Kuester H."/>
            <person name="Laamanen P."/>
            <person name="Legros Y."/>
            <person name="Louis E.J."/>
            <person name="Moeller-Rieker S."/>
            <person name="Monnet A."/>
            <person name="Moro M."/>
            <person name="Mueller-Auer S."/>
            <person name="Nussbaumer B."/>
            <person name="Paricio N."/>
            <person name="Paulin L."/>
            <person name="Perea J."/>
            <person name="Perez-Alonso M."/>
            <person name="Perez-Ortin J.E."/>
            <person name="Pohl T.M."/>
            <person name="Prydz H."/>
            <person name="Purnelle B."/>
            <person name="Rasmussen S.W."/>
            <person name="Remacha M.A."/>
            <person name="Revuelta J.L."/>
            <person name="Rieger M."/>
            <person name="Salom D."/>
            <person name="Saluz H.P."/>
            <person name="Saiz J.E."/>
            <person name="Saren A.-M."/>
            <person name="Schaefer M."/>
            <person name="Scharfe M."/>
            <person name="Schmidt E.R."/>
            <person name="Schneider C."/>
            <person name="Scholler P."/>
            <person name="Schwarz S."/>
            <person name="Soler-Mira A."/>
            <person name="Urrestarazu L.A."/>
            <person name="Verhasselt P."/>
            <person name="Vissers S."/>
            <person name="Voet M."/>
            <person name="Volckaert G."/>
            <person name="Wagner G."/>
            <person name="Wambutt R."/>
            <person name="Wedler E."/>
            <person name="Wedler H."/>
            <person name="Woelfl S."/>
            <person name="Harris D.E."/>
            <person name="Bowman S."/>
            <person name="Brown D."/>
            <person name="Churcher C.M."/>
            <person name="Connor R."/>
            <person name="Dedman K."/>
            <person name="Gentles S."/>
            <person name="Hamlin N."/>
            <person name="Hunt S."/>
            <person name="Jones L."/>
            <person name="McDonald S."/>
            <person name="Murphy L.D."/>
            <person name="Niblett D."/>
            <person name="Odell C."/>
            <person name="Oliver K."/>
            <person name="Rajandream M.A."/>
            <person name="Richards C."/>
            <person name="Shore L."/>
            <person name="Walsh S.V."/>
            <person name="Barrell B.G."/>
            <person name="Dietrich F.S."/>
            <person name="Mulligan J.T."/>
            <person name="Allen E."/>
            <person name="Araujo R."/>
            <person name="Aviles E."/>
            <person name="Berno A."/>
            <person name="Carpenter J."/>
            <person name="Chen E."/>
            <person name="Cherry J.M."/>
            <person name="Chung E."/>
            <person name="Duncan M."/>
            <person name="Hunicke-Smith S."/>
            <person name="Hyman R.W."/>
            <person name="Komp C."/>
            <person name="Lashkari D."/>
            <person name="Lew H."/>
            <person name="Lin D."/>
            <person name="Mosedale D."/>
            <person name="Nakahara K."/>
            <person name="Namath A."/>
            <person name="Oefner P."/>
            <person name="Oh C."/>
            <person name="Petel F.X."/>
            <person name="Roberts D."/>
            <person name="Schramm S."/>
            <person name="Schroeder M."/>
            <person name="Shogren T."/>
            <person name="Shroff N."/>
            <person name="Winant A."/>
            <person name="Yelton M.A."/>
            <person name="Botstein D."/>
            <person name="Davis R.W."/>
            <person name="Johnston M."/>
            <person name="Andrews S."/>
            <person name="Brinkman R."/>
            <person name="Cooper J."/>
            <person name="Ding H."/>
            <person name="Du Z."/>
            <person name="Favello A."/>
            <person name="Fulton L."/>
            <person name="Gattung S."/>
            <person name="Greco T."/>
            <person name="Hallsworth K."/>
            <person name="Hawkins J."/>
            <person name="Hillier L.W."/>
            <person name="Jier M."/>
            <person name="Johnson D."/>
            <person name="Johnston L."/>
            <person name="Kirsten J."/>
            <person name="Kucaba T."/>
            <person name="Langston Y."/>
            <person name="Latreille P."/>
            <person name="Le T."/>
            <person name="Mardis E."/>
            <person name="Menezes S."/>
            <person name="Miller N."/>
            <person name="Nhan M."/>
            <person name="Pauley A."/>
            <person name="Peluso D."/>
            <person name="Rifkin L."/>
            <person name="Riles L."/>
            <person name="Taich A."/>
            <person name="Trevaskis E."/>
            <person name="Vignati D."/>
            <person name="Wilcox L."/>
            <person name="Wohldman P."/>
            <person name="Vaudin M."/>
            <person name="Wilson R."/>
            <person name="Waterston R."/>
            <person name="Albermann K."/>
            <person name="Hani J."/>
            <person name="Heumann K."/>
            <person name="Kleine K."/>
            <person name="Mewes H.-W."/>
            <person name="Zollner A."/>
            <person name="Zaccaria P."/>
        </authorList>
    </citation>
    <scope>NUCLEOTIDE SEQUENCE [LARGE SCALE GENOMIC DNA]</scope>
    <source>
        <strain>ATCC 204508 / S288c</strain>
    </source>
</reference>
<reference key="5">
    <citation type="journal article" date="2014" name="G3 (Bethesda)">
        <title>The reference genome sequence of Saccharomyces cerevisiae: Then and now.</title>
        <authorList>
            <person name="Engel S.R."/>
            <person name="Dietrich F.S."/>
            <person name="Fisk D.G."/>
            <person name="Binkley G."/>
            <person name="Balakrishnan R."/>
            <person name="Costanzo M.C."/>
            <person name="Dwight S.S."/>
            <person name="Hitz B.C."/>
            <person name="Karra K."/>
            <person name="Nash R.S."/>
            <person name="Weng S."/>
            <person name="Wong E.D."/>
            <person name="Lloyd P."/>
            <person name="Skrzypek M.S."/>
            <person name="Miyasato S.R."/>
            <person name="Simison M."/>
            <person name="Cherry J.M."/>
        </authorList>
    </citation>
    <scope>GENOME REANNOTATION</scope>
    <source>
        <strain>ATCC 204508 / S288c</strain>
    </source>
</reference>
<reference key="6">
    <citation type="journal article" date="2007" name="Genome Res.">
        <title>Approaching a complete repository of sequence-verified protein-encoding clones for Saccharomyces cerevisiae.</title>
        <authorList>
            <person name="Hu Y."/>
            <person name="Rolfs A."/>
            <person name="Bhullar B."/>
            <person name="Murthy T.V.S."/>
            <person name="Zhu C."/>
            <person name="Berger M.F."/>
            <person name="Camargo A.A."/>
            <person name="Kelley F."/>
            <person name="McCarron S."/>
            <person name="Jepson D."/>
            <person name="Richardson A."/>
            <person name="Raphael J."/>
            <person name="Moreira D."/>
            <person name="Taycher E."/>
            <person name="Zuo D."/>
            <person name="Mohr S."/>
            <person name="Kane M.F."/>
            <person name="Williamson J."/>
            <person name="Simpson A.J.G."/>
            <person name="Bulyk M.L."/>
            <person name="Harlow E."/>
            <person name="Marsischky G."/>
            <person name="Kolodner R.D."/>
            <person name="LaBaer J."/>
        </authorList>
    </citation>
    <scope>NUCLEOTIDE SEQUENCE [GENOMIC DNA]</scope>
    <source>
        <strain>ATCC 204508 / S288c</strain>
    </source>
</reference>
<reference key="7">
    <citation type="journal article" date="2003" name="Nature">
        <title>Global analysis of protein expression in yeast.</title>
        <authorList>
            <person name="Ghaemmaghami S."/>
            <person name="Huh W.-K."/>
            <person name="Bower K."/>
            <person name="Howson R.W."/>
            <person name="Belle A."/>
            <person name="Dephoure N."/>
            <person name="O'Shea E.K."/>
            <person name="Weissman J.S."/>
        </authorList>
    </citation>
    <scope>LEVEL OF PROTEIN EXPRESSION [LARGE SCALE ANALYSIS]</scope>
</reference>
<protein>
    <recommendedName>
        <fullName>DNA repair protein RAD55</fullName>
    </recommendedName>
</protein>